<gene>
    <name evidence="1" type="primary">yciB</name>
    <name type="ordered locus">HEAR1737</name>
</gene>
<keyword id="KW-0997">Cell inner membrane</keyword>
<keyword id="KW-1003">Cell membrane</keyword>
<keyword id="KW-0472">Membrane</keyword>
<keyword id="KW-1185">Reference proteome</keyword>
<keyword id="KW-0812">Transmembrane</keyword>
<keyword id="KW-1133">Transmembrane helix</keyword>
<dbReference type="EMBL" id="CU207211">
    <property type="protein sequence ID" value="CAL61893.1"/>
    <property type="molecule type" value="Genomic_DNA"/>
</dbReference>
<dbReference type="STRING" id="204773.HEAR1737"/>
<dbReference type="KEGG" id="har:HEAR1737"/>
<dbReference type="eggNOG" id="COG2917">
    <property type="taxonomic scope" value="Bacteria"/>
</dbReference>
<dbReference type="HOGENOM" id="CLU_089554_2_0_4"/>
<dbReference type="OrthoDB" id="9788219at2"/>
<dbReference type="Proteomes" id="UP000006697">
    <property type="component" value="Chromosome"/>
</dbReference>
<dbReference type="GO" id="GO:0005886">
    <property type="term" value="C:plasma membrane"/>
    <property type="evidence" value="ECO:0007669"/>
    <property type="project" value="UniProtKB-SubCell"/>
</dbReference>
<dbReference type="HAMAP" id="MF_00189">
    <property type="entry name" value="YciB"/>
    <property type="match status" value="1"/>
</dbReference>
<dbReference type="InterPro" id="IPR006008">
    <property type="entry name" value="YciB"/>
</dbReference>
<dbReference type="NCBIfam" id="TIGR00997">
    <property type="entry name" value="ispZ"/>
    <property type="match status" value="1"/>
</dbReference>
<dbReference type="NCBIfam" id="NF001325">
    <property type="entry name" value="PRK00259.1-3"/>
    <property type="match status" value="1"/>
</dbReference>
<dbReference type="PANTHER" id="PTHR36917:SF1">
    <property type="entry name" value="INNER MEMBRANE-SPANNING PROTEIN YCIB"/>
    <property type="match status" value="1"/>
</dbReference>
<dbReference type="PANTHER" id="PTHR36917">
    <property type="entry name" value="INTRACELLULAR SEPTATION PROTEIN A-RELATED"/>
    <property type="match status" value="1"/>
</dbReference>
<dbReference type="Pfam" id="PF04279">
    <property type="entry name" value="IspA"/>
    <property type="match status" value="1"/>
</dbReference>
<evidence type="ECO:0000255" key="1">
    <source>
        <dbReference type="HAMAP-Rule" id="MF_00189"/>
    </source>
</evidence>
<comment type="function">
    <text evidence="1">Plays a role in cell envelope biogenesis, maintenance of cell envelope integrity and membrane homeostasis.</text>
</comment>
<comment type="subcellular location">
    <subcellularLocation>
        <location evidence="1">Cell inner membrane</location>
        <topology evidence="1">Multi-pass membrane protein</topology>
    </subcellularLocation>
</comment>
<comment type="similarity">
    <text evidence="1">Belongs to the YciB family.</text>
</comment>
<accession>A4G5V6</accession>
<sequence>MKFLFDLFPVILFFAVFKWGEGNADAAQAFGQQFLSGLVSGGQVTVTQAPILLATAIAIIATILQIGYLLSRRKKVDGTLWLSLAIIVFFGGATIYFHNETFIKWKPTVLYWCFAAALLFSQIFLNKNLIRTMMEKQMSLPDGVWRRVNLSWVAFFITMGLLNLYVAFNFSTAAWVNFKLFGGMGLMFAFIIIQSLLLSKYLKEPQ</sequence>
<reference key="1">
    <citation type="journal article" date="2007" name="PLoS Genet.">
        <title>A tale of two oxidation states: bacterial colonization of arsenic-rich environments.</title>
        <authorList>
            <person name="Muller D."/>
            <person name="Medigue C."/>
            <person name="Koechler S."/>
            <person name="Barbe V."/>
            <person name="Barakat M."/>
            <person name="Talla E."/>
            <person name="Bonnefoy V."/>
            <person name="Krin E."/>
            <person name="Arsene-Ploetze F."/>
            <person name="Carapito C."/>
            <person name="Chandler M."/>
            <person name="Cournoyer B."/>
            <person name="Cruveiller S."/>
            <person name="Dossat C."/>
            <person name="Duval S."/>
            <person name="Heymann M."/>
            <person name="Leize E."/>
            <person name="Lieutaud A."/>
            <person name="Lievremont D."/>
            <person name="Makita Y."/>
            <person name="Mangenot S."/>
            <person name="Nitschke W."/>
            <person name="Ortet P."/>
            <person name="Perdrial N."/>
            <person name="Schoepp B."/>
            <person name="Siguier P."/>
            <person name="Simeonova D.D."/>
            <person name="Rouy Z."/>
            <person name="Segurens B."/>
            <person name="Turlin E."/>
            <person name="Vallenet D."/>
            <person name="van Dorsselaer A."/>
            <person name="Weiss S."/>
            <person name="Weissenbach J."/>
            <person name="Lett M.-C."/>
            <person name="Danchin A."/>
            <person name="Bertin P.N."/>
        </authorList>
    </citation>
    <scope>NUCLEOTIDE SEQUENCE [LARGE SCALE GENOMIC DNA]</scope>
    <source>
        <strain>ULPAs1</strain>
    </source>
</reference>
<protein>
    <recommendedName>
        <fullName evidence="1">Inner membrane-spanning protein YciB</fullName>
    </recommendedName>
</protein>
<proteinExistence type="inferred from homology"/>
<organism>
    <name type="scientific">Herminiimonas arsenicoxydans</name>
    <dbReference type="NCBI Taxonomy" id="204773"/>
    <lineage>
        <taxon>Bacteria</taxon>
        <taxon>Pseudomonadati</taxon>
        <taxon>Pseudomonadota</taxon>
        <taxon>Betaproteobacteria</taxon>
        <taxon>Burkholderiales</taxon>
        <taxon>Oxalobacteraceae</taxon>
        <taxon>Herminiimonas</taxon>
    </lineage>
</organism>
<feature type="chain" id="PRO_1000021019" description="Inner membrane-spanning protein YciB">
    <location>
        <begin position="1"/>
        <end position="206"/>
    </location>
</feature>
<feature type="transmembrane region" description="Helical" evidence="1">
    <location>
        <begin position="50"/>
        <end position="70"/>
    </location>
</feature>
<feature type="transmembrane region" description="Helical" evidence="1">
    <location>
        <begin position="78"/>
        <end position="98"/>
    </location>
</feature>
<feature type="transmembrane region" description="Helical" evidence="1">
    <location>
        <begin position="105"/>
        <end position="125"/>
    </location>
</feature>
<feature type="transmembrane region" description="Helical" evidence="1">
    <location>
        <begin position="150"/>
        <end position="170"/>
    </location>
</feature>
<feature type="transmembrane region" description="Helical" evidence="1">
    <location>
        <begin position="173"/>
        <end position="193"/>
    </location>
</feature>
<name>YCIB_HERAR</name>